<accession>Q2PE51</accession>
<accession>Q2PE50</accession>
<organism>
    <name type="scientific">Crotalus durissus collilineatus</name>
    <name type="common">Brazilian rattlesnake</name>
    <dbReference type="NCBI Taxonomy" id="221569"/>
    <lineage>
        <taxon>Eukaryota</taxon>
        <taxon>Metazoa</taxon>
        <taxon>Chordata</taxon>
        <taxon>Craniata</taxon>
        <taxon>Vertebrata</taxon>
        <taxon>Euteleostomi</taxon>
        <taxon>Lepidosauria</taxon>
        <taxon>Squamata</taxon>
        <taxon>Bifurcata</taxon>
        <taxon>Unidentata</taxon>
        <taxon>Episquamata</taxon>
        <taxon>Toxicofera</taxon>
        <taxon>Serpentes</taxon>
        <taxon>Colubroidea</taxon>
        <taxon>Viperidae</taxon>
        <taxon>Crotalinae</taxon>
        <taxon>Crotalus</taxon>
    </lineage>
</organism>
<keyword id="KW-0165">Cleavage on pair of basic residues</keyword>
<keyword id="KW-0903">Direct protein sequencing</keyword>
<keyword id="KW-1015">Disulfide bond</keyword>
<keyword id="KW-0382">Hypotensive agent</keyword>
<keyword id="KW-0481">Metalloenzyme inhibitor</keyword>
<keyword id="KW-0483">Metalloprotease inhibitor</keyword>
<keyword id="KW-0646">Protease inhibitor</keyword>
<keyword id="KW-0873">Pyrrolidone carboxylic acid</keyword>
<keyword id="KW-0964">Secreted</keyword>
<keyword id="KW-0732">Signal</keyword>
<keyword id="KW-0800">Toxin</keyword>
<keyword id="KW-0838">Vasoactive</keyword>
<keyword id="KW-0840">Vasodilator</keyword>
<name>BNP_CRODO</name>
<comment type="function">
    <text evidence="1">Bradykinin-potentiating peptide both inhibits the activity of the angiotensin-converting enzyme (ACE) and enhances the action of bradykinin by inhibiting the peptidases that inactivate it. It acts as an indirect hypotensive agent (By similarity).</text>
</comment>
<comment type="function">
    <molecule>Bradykinin inhibitor peptide homolog</molecule>
    <text evidence="1 7">antagonizes the vasodilatory actions of bradykinin at the B2 bradykinin receptor (By similarity). Has no demonstrable hypotensive activity when injected intravenously in rats.</text>
</comment>
<comment type="function">
    <molecule>C-type natriuretic peptide</molecule>
    <text evidence="2">has a vasorelaxant activity in rat aortic strips and a diuretic potency in anesthetized rats (By similarity). May act by activating natriuretic receptors (NPR1 and/or NPR2).</text>
</comment>
<comment type="subcellular location">
    <subcellularLocation>
        <location evidence="7">Secreted</location>
    </subcellularLocation>
</comment>
<comment type="tissue specificity">
    <text evidence="7">Venom gland.</text>
</comment>
<comment type="mass spectrometry" mass="1020.5" method="Electrospray" evidence="7">
    <molecule>Bradykinin inhibitor peptide homolog</molecule>
</comment>
<comment type="similarity">
    <text evidence="8">In the N-terminal section; belongs to the bradykinin-potentiating peptide family.</text>
</comment>
<comment type="similarity">
    <text evidence="8">In the C-terminal section; belongs to the natriuretic peptide family.</text>
</comment>
<sequence length="181" mass="18514">MFVSRLAASGLLLLALLAVSLDGKPLQQWSQRWPHLEIPPLVVQNWKSPTQLQARESPAGGTTALREELSLGPEAALDTPPAGPDGGPRGSKAAAAAPQRLSKSKGASATSAASRDLRTDGKQARQNWGRLVSPDHHSAAGGGGGGGGGARRLKGLAKKRAGNGCFGLKLDRIGSMSGLGC</sequence>
<dbReference type="EMBL" id="AB246364">
    <property type="protein sequence ID" value="BAE73272.1"/>
    <property type="molecule type" value="mRNA"/>
</dbReference>
<dbReference type="EMBL" id="AB246365">
    <property type="protein sequence ID" value="BAE73273.1"/>
    <property type="molecule type" value="mRNA"/>
</dbReference>
<dbReference type="GO" id="GO:0005576">
    <property type="term" value="C:extracellular region"/>
    <property type="evidence" value="ECO:0007669"/>
    <property type="project" value="UniProtKB-SubCell"/>
</dbReference>
<dbReference type="GO" id="GO:0005179">
    <property type="term" value="F:hormone activity"/>
    <property type="evidence" value="ECO:0007669"/>
    <property type="project" value="InterPro"/>
</dbReference>
<dbReference type="GO" id="GO:0030414">
    <property type="term" value="F:peptidase inhibitor activity"/>
    <property type="evidence" value="ECO:0007669"/>
    <property type="project" value="UniProtKB-KW"/>
</dbReference>
<dbReference type="GO" id="GO:0090729">
    <property type="term" value="F:toxin activity"/>
    <property type="evidence" value="ECO:0007669"/>
    <property type="project" value="UniProtKB-KW"/>
</dbReference>
<dbReference type="GO" id="GO:0006182">
    <property type="term" value="P:cGMP biosynthetic process"/>
    <property type="evidence" value="ECO:0007669"/>
    <property type="project" value="TreeGrafter"/>
</dbReference>
<dbReference type="GO" id="GO:0007168">
    <property type="term" value="P:receptor guanylyl cyclase signaling pathway"/>
    <property type="evidence" value="ECO:0007669"/>
    <property type="project" value="TreeGrafter"/>
</dbReference>
<dbReference type="GO" id="GO:0008217">
    <property type="term" value="P:regulation of blood pressure"/>
    <property type="evidence" value="ECO:0007669"/>
    <property type="project" value="UniProtKB-KW"/>
</dbReference>
<dbReference type="GO" id="GO:0042311">
    <property type="term" value="P:vasodilation"/>
    <property type="evidence" value="ECO:0007669"/>
    <property type="project" value="UniProtKB-KW"/>
</dbReference>
<dbReference type="InterPro" id="IPR000663">
    <property type="entry name" value="Natr_peptide"/>
</dbReference>
<dbReference type="InterPro" id="IPR030480">
    <property type="entry name" value="Natr_peptide_CS"/>
</dbReference>
<dbReference type="PANTHER" id="PTHR12167">
    <property type="entry name" value="C-TYPE NATRIURETIC PEPTIDE"/>
    <property type="match status" value="1"/>
</dbReference>
<dbReference type="PANTHER" id="PTHR12167:SF2">
    <property type="entry name" value="C-TYPE NATRIURETIC PEPTIDE"/>
    <property type="match status" value="1"/>
</dbReference>
<dbReference type="Pfam" id="PF00212">
    <property type="entry name" value="ANP"/>
    <property type="match status" value="1"/>
</dbReference>
<dbReference type="PRINTS" id="PR00710">
    <property type="entry name" value="NATPEPTIDES"/>
</dbReference>
<dbReference type="SMART" id="SM00183">
    <property type="entry name" value="NAT_PEP"/>
    <property type="match status" value="1"/>
</dbReference>
<dbReference type="PROSITE" id="PS00263">
    <property type="entry name" value="NATRIURETIC_PEPTIDE"/>
    <property type="match status" value="1"/>
</dbReference>
<feature type="signal peptide" evidence="5">
    <location>
        <begin position="1"/>
        <end position="23"/>
    </location>
</feature>
<feature type="propeptide" id="PRO_0000335898" evidence="5">
    <location>
        <begin position="24"/>
        <end position="30"/>
    </location>
</feature>
<feature type="peptide" id="PRO_0000335899" description="Bradykinin-potentiating peptide-1">
    <location>
        <begin position="31"/>
        <end position="40"/>
    </location>
</feature>
<feature type="propeptide" id="PRO_0000335900" evidence="5">
    <location>
        <begin position="41"/>
        <end position="43"/>
    </location>
</feature>
<feature type="peptide" id="PRO_0000335901" description="Bradykinin-potentiating peptide-2">
    <location>
        <begin position="44"/>
        <end position="49"/>
    </location>
</feature>
<feature type="propeptide" id="PRO_0000335902" evidence="5">
    <location>
        <begin position="50"/>
        <end position="78"/>
    </location>
</feature>
<feature type="peptide" id="PRO_0000335903" description="Bradykinin inhibitor peptide homolog" evidence="7">
    <location>
        <begin position="79"/>
        <end position="89"/>
    </location>
</feature>
<feature type="propeptide" id="PRO_0000335904" evidence="5">
    <location>
        <begin position="90"/>
        <end position="157"/>
    </location>
</feature>
<feature type="peptide" id="PRO_0000335905" description="C-type natriuretic peptide" evidence="4">
    <location>
        <begin position="160"/>
        <end position="181"/>
    </location>
</feature>
<feature type="region of interest" description="Disordered" evidence="6">
    <location>
        <begin position="74"/>
        <end position="153"/>
    </location>
</feature>
<feature type="compositionally biased region" description="Low complexity" evidence="6">
    <location>
        <begin position="104"/>
        <end position="114"/>
    </location>
</feature>
<feature type="compositionally biased region" description="Gly residues" evidence="6">
    <location>
        <begin position="140"/>
        <end position="150"/>
    </location>
</feature>
<feature type="modified residue" description="Pyrrolidone carboxylic acid" evidence="1">
    <location>
        <position position="31"/>
    </location>
</feature>
<feature type="modified residue" description="Pyrrolidone carboxylic acid" evidence="1">
    <location>
        <position position="44"/>
    </location>
</feature>
<feature type="disulfide bond" evidence="3">
    <location>
        <begin position="165"/>
        <end position="181"/>
    </location>
</feature>
<feature type="sequence variant" description="In isoform 2.">
    <original>Q</original>
    <variation>H</variation>
    <location>
        <position position="31"/>
    </location>
</feature>
<feature type="sequence variant" description="In isoform 2.">
    <original>L</original>
    <variation>P</variation>
    <location>
        <position position="36"/>
    </location>
</feature>
<protein>
    <recommendedName>
        <fullName>Bradykinin-potentiating and C-type natriuretic peptides</fullName>
    </recommendedName>
    <alternativeName>
        <fullName>Angiotensin converting enzyme inhibitor-CNP</fullName>
        <shortName>ACEI-CNP</shortName>
    </alternativeName>
    <alternativeName>
        <fullName>BPP-CNP</fullName>
    </alternativeName>
    <component>
        <recommendedName>
            <fullName>Bradykinin-potentiating peptide-1</fullName>
            <shortName>BPP-1</shortName>
        </recommendedName>
    </component>
    <component>
        <recommendedName>
            <fullName>Bradykinin-potentiating peptide-2</fullName>
            <shortName>BPP-2</shortName>
        </recommendedName>
    </component>
    <component>
        <recommendedName>
            <fullName>Bradykinin inhibitor peptide homolog</fullName>
        </recommendedName>
        <alternativeName>
            <fullName>Cdc peptide</fullName>
        </alternativeName>
        <alternativeName>
            <fullName>Novel peptide</fullName>
        </alternativeName>
    </component>
    <component>
        <recommendedName>
            <fullName>C-type natriuretic peptide</fullName>
            <shortName>CNP</shortName>
        </recommendedName>
    </component>
</protein>
<evidence type="ECO:0000250" key="1"/>
<evidence type="ECO:0000250" key="2">
    <source>
        <dbReference type="UniProtKB" id="P0C7P5"/>
    </source>
</evidence>
<evidence type="ECO:0000250" key="3">
    <source>
        <dbReference type="UniProtKB" id="P0DMD6"/>
    </source>
</evidence>
<evidence type="ECO:0000250" key="4">
    <source>
        <dbReference type="UniProtKB" id="Q27J49"/>
    </source>
</evidence>
<evidence type="ECO:0000255" key="5"/>
<evidence type="ECO:0000256" key="6">
    <source>
        <dbReference type="SAM" id="MobiDB-lite"/>
    </source>
</evidence>
<evidence type="ECO:0000269" key="7">
    <source>
    </source>
</evidence>
<evidence type="ECO:0000305" key="8"/>
<proteinExistence type="evidence at protein level"/>
<reference key="1">
    <citation type="journal article" date="2006" name="Comp. Biochem. Physiol.">
        <title>A novel peptide from the ACEI/BPP-CNP precursor in the venom of Crotalus durissus collilineatus.</title>
        <authorList>
            <person name="Higuchi S."/>
            <person name="Murayama N."/>
            <person name="Saguchi K."/>
            <person name="Ohi H."/>
            <person name="Fujita Y."/>
            <person name="da Silva N.J. Jr."/>
            <person name="de Siqueira R.J.B."/>
            <person name="Lahlou S."/>
            <person name="Aird S.D."/>
        </authorList>
    </citation>
    <scope>NUCLEOTIDE SEQUENCE [MRNA]</scope>
    <scope>PROTEIN SEQUENCE OF 79-89</scope>
    <scope>FUNCTION</scope>
    <scope>SUBCELLULAR LOCATION</scope>
    <scope>TISSUE SPECIFICITY</scope>
    <scope>MASS SPECTROMETRY OF 79-89</scope>
    <source>
        <tissue>Venom</tissue>
        <tissue>Venom gland</tissue>
    </source>
</reference>